<comment type="function">
    <text evidence="1">Component of the cytochrome b6-f complex, which mediates electron transfer between photosystem II (PSII) and photosystem I (PSI), cyclic electron flow around PSI, and state transitions.</text>
</comment>
<comment type="cofactor">
    <cofactor evidence="1">
        <name>heme</name>
        <dbReference type="ChEBI" id="CHEBI:30413"/>
    </cofactor>
    <text evidence="1">Binds 1 heme group covalently.</text>
</comment>
<comment type="subunit">
    <text evidence="1">The 4 large subunits of the cytochrome b6-f complex are cytochrome b6, subunit IV (17 kDa polypeptide, petD), cytochrome f and the Rieske protein, while the 4 small subunits are PetG, PetL, PetM and PetN. The complex functions as a dimer (By similarity).</text>
</comment>
<comment type="subcellular location">
    <subcellularLocation>
        <location evidence="1">Plastid</location>
        <location evidence="1">Chloroplast thylakoid membrane</location>
        <topology evidence="1">Single-pass membrane protein</topology>
    </subcellularLocation>
</comment>
<comment type="RNA editing">
    <location>
        <position position="1" evidence="3 4"/>
    </location>
    <location>
        <position position="19" evidence="3 4"/>
    </location>
    <location>
        <position position="53" evidence="3 4"/>
    </location>
    <location>
        <position position="74" evidence="3 4"/>
    </location>
    <location>
        <position position="96" evidence="3 4"/>
    </location>
    <location>
        <position position="195" evidence="3 4"/>
    </location>
    <location>
        <position position="246" evidence="3 4"/>
    </location>
    <location>
        <position position="275" evidence="3 4"/>
    </location>
    <location>
        <position position="282" evidence="3 4"/>
    </location>
    <location>
        <position position="292" evidence="3 4"/>
    </location>
    <location>
        <position position="295" evidence="3 4"/>
    </location>
    <text>The initiator methionine is created by RNA editing. The nonsense codons at positions 74, 96, 195 and 275 are modified to sense codons.</text>
</comment>
<comment type="similarity">
    <text evidence="5">Belongs to the cytochrome f family.</text>
</comment>
<evidence type="ECO:0000250" key="1"/>
<evidence type="ECO:0000255" key="2"/>
<evidence type="ECO:0000269" key="3">
    <source>
    </source>
</evidence>
<evidence type="ECO:0000269" key="4">
    <source>
    </source>
</evidence>
<evidence type="ECO:0000305" key="5"/>
<sequence>MQNRKTYAYDWIKKWMIKSISTLIIINTMVWSSVSEAYPIFAQQGYENPREATGRIVCANCHLAKKPVDIEVPQSVLPDTVFEAVVKIPYDTQVKQVLANGKKGALNVGAVLILPEGFELAPSNRVPPEMKEKIGNLYFQSYRPDKKNILVVGPVPGKKYSEIIFPILAPNPATNKDAHFLKYPIYVGGNRGRGQIYPDGSKSNNTVYNASTTGIIKKVLRKEKGGYEIIIDNTLDGRQVIDIVPPGPELIISEGESIKVDQPLTNNPNVGGFGQGDAEIVLQDVLRVQGLLLFFASVILAQIFLVLKKKQFEKVQLAEMNF</sequence>
<proteinExistence type="evidence at transcript level"/>
<keyword id="KW-0150">Chloroplast</keyword>
<keyword id="KW-0249">Electron transport</keyword>
<keyword id="KW-0349">Heme</keyword>
<keyword id="KW-0408">Iron</keyword>
<keyword id="KW-0472">Membrane</keyword>
<keyword id="KW-0479">Metal-binding</keyword>
<keyword id="KW-0602">Photosynthesis</keyword>
<keyword id="KW-0934">Plastid</keyword>
<keyword id="KW-0691">RNA editing</keyword>
<keyword id="KW-0732">Signal</keyword>
<keyword id="KW-0793">Thylakoid</keyword>
<keyword id="KW-0812">Transmembrane</keyword>
<keyword id="KW-1133">Transmembrane helix</keyword>
<keyword id="KW-0813">Transport</keyword>
<feature type="signal peptide" evidence="1">
    <location>
        <begin position="1"/>
        <end position="37"/>
    </location>
</feature>
<feature type="chain" id="PRO_0000023803" description="Cytochrome f">
    <location>
        <begin position="38"/>
        <end position="322"/>
    </location>
</feature>
<feature type="transmembrane region" description="Helical" evidence="2">
    <location>
        <begin position="285"/>
        <end position="307"/>
    </location>
</feature>
<feature type="binding site" description="axial binding residue" evidence="1">
    <location>
        <position position="38"/>
    </location>
    <ligand>
        <name>heme</name>
        <dbReference type="ChEBI" id="CHEBI:30413"/>
    </ligand>
    <ligandPart>
        <name>Fe</name>
        <dbReference type="ChEBI" id="CHEBI:18248"/>
    </ligandPart>
</feature>
<feature type="binding site" description="covalent" evidence="1">
    <location>
        <position position="58"/>
    </location>
    <ligand>
        <name>heme</name>
        <dbReference type="ChEBI" id="CHEBI:30413"/>
    </ligand>
</feature>
<feature type="binding site" description="covalent" evidence="1">
    <location>
        <position position="61"/>
    </location>
    <ligand>
        <name>heme</name>
        <dbReference type="ChEBI" id="CHEBI:30413"/>
    </ligand>
</feature>
<feature type="binding site" description="axial binding residue" evidence="1">
    <location>
        <position position="62"/>
    </location>
    <ligand>
        <name>heme</name>
        <dbReference type="ChEBI" id="CHEBI:30413"/>
    </ligand>
    <ligandPart>
        <name>Fe</name>
        <dbReference type="ChEBI" id="CHEBI:18248"/>
    </ligandPart>
</feature>
<organism>
    <name type="scientific">Anthoceros angustus</name>
    <name type="common">Hornwort</name>
    <name type="synonym">Anthoceros formosae</name>
    <dbReference type="NCBI Taxonomy" id="48387"/>
    <lineage>
        <taxon>Eukaryota</taxon>
        <taxon>Viridiplantae</taxon>
        <taxon>Streptophyta</taxon>
        <taxon>Embryophyta</taxon>
        <taxon>Anthocerotophyta</taxon>
        <taxon>Anthocerotopsida</taxon>
        <taxon>Anthocerotidae</taxon>
        <taxon>Anthocerotales</taxon>
        <taxon>Anthocerotaceae</taxon>
        <taxon>Anthoceros</taxon>
    </lineage>
</organism>
<accession>Q85AR2</accession>
<protein>
    <recommendedName>
        <fullName>Cytochrome f</fullName>
    </recommendedName>
</protein>
<gene>
    <name type="primary">petA</name>
</gene>
<reference key="1">
    <citation type="journal article" date="2003" name="Nucleic Acids Res.">
        <title>The complete nucleotide sequence of the hornwort (Anthoceros formosae) chloroplast genome: insight into the earliest land plants.</title>
        <authorList>
            <person name="Kugita M."/>
            <person name="Kaneko A."/>
            <person name="Yamamoto Y."/>
            <person name="Takeya Y."/>
            <person name="Matsumoto T."/>
            <person name="Yoshinaga K."/>
        </authorList>
    </citation>
    <scope>NUCLEOTIDE SEQUENCE [LARGE SCALE GENOMIC DNA]</scope>
    <scope>RNA EDITING</scope>
</reference>
<reference key="2">
    <citation type="journal article" date="2003" name="Nucleic Acids Res.">
        <title>RNA editing in hornwort chloroplasts makes more than half the genes functional.</title>
        <authorList>
            <person name="Kugita M."/>
            <person name="Yamamoto Y."/>
            <person name="Fujikawa T."/>
            <person name="Matsumoto T."/>
            <person name="Yoshinaga K."/>
        </authorList>
    </citation>
    <scope>NUCLEOTIDE SEQUENCE [MRNA]</scope>
    <scope>RNA EDITING</scope>
    <source>
        <tissue>Thallus</tissue>
    </source>
</reference>
<name>CYF_ANTAG</name>
<geneLocation type="chloroplast"/>
<dbReference type="EMBL" id="AB086179">
    <property type="protein sequence ID" value="BAC55362.1"/>
    <property type="molecule type" value="Genomic_DNA"/>
</dbReference>
<dbReference type="EMBL" id="AB087454">
    <property type="protein sequence ID" value="BAC55458.1"/>
    <property type="molecule type" value="mRNA"/>
</dbReference>
<dbReference type="RefSeq" id="NP_777426.1">
    <property type="nucleotide sequence ID" value="NC_004543.1"/>
</dbReference>
<dbReference type="SMR" id="Q85AR2"/>
<dbReference type="GeneID" id="2553510"/>
<dbReference type="GO" id="GO:0009535">
    <property type="term" value="C:chloroplast thylakoid membrane"/>
    <property type="evidence" value="ECO:0007669"/>
    <property type="project" value="UniProtKB-SubCell"/>
</dbReference>
<dbReference type="GO" id="GO:0009055">
    <property type="term" value="F:electron transfer activity"/>
    <property type="evidence" value="ECO:0007669"/>
    <property type="project" value="UniProtKB-UniRule"/>
</dbReference>
<dbReference type="GO" id="GO:0020037">
    <property type="term" value="F:heme binding"/>
    <property type="evidence" value="ECO:0007669"/>
    <property type="project" value="InterPro"/>
</dbReference>
<dbReference type="GO" id="GO:0005506">
    <property type="term" value="F:iron ion binding"/>
    <property type="evidence" value="ECO:0007669"/>
    <property type="project" value="InterPro"/>
</dbReference>
<dbReference type="GO" id="GO:0015979">
    <property type="term" value="P:photosynthesis"/>
    <property type="evidence" value="ECO:0007669"/>
    <property type="project" value="UniProtKB-UniRule"/>
</dbReference>
<dbReference type="FunFam" id="1.20.5.700:FF:000001">
    <property type="entry name" value="Cytochrome f"/>
    <property type="match status" value="1"/>
</dbReference>
<dbReference type="FunFam" id="2.40.50.100:FF:000007">
    <property type="entry name" value="Cytochrome f"/>
    <property type="match status" value="1"/>
</dbReference>
<dbReference type="FunFam" id="2.60.40.830:FF:000001">
    <property type="entry name" value="Cytochrome f"/>
    <property type="match status" value="1"/>
</dbReference>
<dbReference type="Gene3D" id="2.40.50.100">
    <property type="match status" value="1"/>
</dbReference>
<dbReference type="Gene3D" id="2.60.40.830">
    <property type="entry name" value="Cytochrome f large domain"/>
    <property type="match status" value="1"/>
</dbReference>
<dbReference type="Gene3D" id="1.20.5.700">
    <property type="entry name" value="Single helix bin"/>
    <property type="match status" value="1"/>
</dbReference>
<dbReference type="HAMAP" id="MF_00610">
    <property type="entry name" value="Cytb6_f_cytF"/>
    <property type="match status" value="1"/>
</dbReference>
<dbReference type="InterPro" id="IPR024058">
    <property type="entry name" value="Cyt-f_TM"/>
</dbReference>
<dbReference type="InterPro" id="IPR002325">
    <property type="entry name" value="Cyt_f"/>
</dbReference>
<dbReference type="InterPro" id="IPR024094">
    <property type="entry name" value="Cyt_f_lg_dom"/>
</dbReference>
<dbReference type="InterPro" id="IPR036826">
    <property type="entry name" value="Cyt_f_lg_dom_sf"/>
</dbReference>
<dbReference type="InterPro" id="IPR011054">
    <property type="entry name" value="Rudment_hybrid_motif"/>
</dbReference>
<dbReference type="PANTHER" id="PTHR33288">
    <property type="match status" value="1"/>
</dbReference>
<dbReference type="PANTHER" id="PTHR33288:SF10">
    <property type="entry name" value="CYTOCHROME F"/>
    <property type="match status" value="1"/>
</dbReference>
<dbReference type="Pfam" id="PF01333">
    <property type="entry name" value="Apocytochr_F_C"/>
    <property type="match status" value="1"/>
</dbReference>
<dbReference type="Pfam" id="PF16639">
    <property type="entry name" value="Apocytochr_F_N"/>
    <property type="match status" value="1"/>
</dbReference>
<dbReference type="PRINTS" id="PR00610">
    <property type="entry name" value="CYTOCHROMEF"/>
</dbReference>
<dbReference type="SUPFAM" id="SSF103431">
    <property type="entry name" value="Cytochrome f subunit of the cytochrome b6f complex, transmembrane anchor"/>
    <property type="match status" value="1"/>
</dbReference>
<dbReference type="SUPFAM" id="SSF49441">
    <property type="entry name" value="Cytochrome f, large domain"/>
    <property type="match status" value="1"/>
</dbReference>
<dbReference type="SUPFAM" id="SSF51246">
    <property type="entry name" value="Rudiment single hybrid motif"/>
    <property type="match status" value="1"/>
</dbReference>
<dbReference type="PROSITE" id="PS51010">
    <property type="entry name" value="CYTF"/>
    <property type="match status" value="1"/>
</dbReference>